<feature type="chain" id="PRO_1000048668" description="Chromosomal replication initiator protein DnaA">
    <location>
        <begin position="1"/>
        <end position="447"/>
    </location>
</feature>
<feature type="region of interest" description="Domain I, interacts with DnaA modulators" evidence="1">
    <location>
        <begin position="1"/>
        <end position="70"/>
    </location>
</feature>
<feature type="region of interest" description="Domain II" evidence="1">
    <location>
        <begin position="70"/>
        <end position="110"/>
    </location>
</feature>
<feature type="region of interest" description="Disordered" evidence="2">
    <location>
        <begin position="87"/>
        <end position="109"/>
    </location>
</feature>
<feature type="region of interest" description="Domain III, AAA+ region" evidence="1">
    <location>
        <begin position="111"/>
        <end position="327"/>
    </location>
</feature>
<feature type="region of interest" description="Domain IV, binds dsDNA" evidence="1">
    <location>
        <begin position="328"/>
        <end position="447"/>
    </location>
</feature>
<feature type="compositionally biased region" description="Polar residues" evidence="2">
    <location>
        <begin position="88"/>
        <end position="99"/>
    </location>
</feature>
<feature type="binding site" evidence="1">
    <location>
        <position position="155"/>
    </location>
    <ligand>
        <name>ATP</name>
        <dbReference type="ChEBI" id="CHEBI:30616"/>
    </ligand>
</feature>
<feature type="binding site" evidence="1">
    <location>
        <position position="157"/>
    </location>
    <ligand>
        <name>ATP</name>
        <dbReference type="ChEBI" id="CHEBI:30616"/>
    </ligand>
</feature>
<feature type="binding site" evidence="1">
    <location>
        <position position="158"/>
    </location>
    <ligand>
        <name>ATP</name>
        <dbReference type="ChEBI" id="CHEBI:30616"/>
    </ligand>
</feature>
<feature type="binding site" evidence="1">
    <location>
        <position position="159"/>
    </location>
    <ligand>
        <name>ATP</name>
        <dbReference type="ChEBI" id="CHEBI:30616"/>
    </ligand>
</feature>
<evidence type="ECO:0000255" key="1">
    <source>
        <dbReference type="HAMAP-Rule" id="MF_00377"/>
    </source>
</evidence>
<evidence type="ECO:0000256" key="2">
    <source>
        <dbReference type="SAM" id="MobiDB-lite"/>
    </source>
</evidence>
<accession>A0L3I7</accession>
<protein>
    <recommendedName>
        <fullName evidence="1">Chromosomal replication initiator protein DnaA</fullName>
    </recommendedName>
</protein>
<dbReference type="EMBL" id="CP000471">
    <property type="protein sequence ID" value="ABK42530.1"/>
    <property type="molecule type" value="Genomic_DNA"/>
</dbReference>
<dbReference type="RefSeq" id="WP_011711704.1">
    <property type="nucleotide sequence ID" value="NC_008576.1"/>
</dbReference>
<dbReference type="SMR" id="A0L3I7"/>
<dbReference type="STRING" id="156889.Mmc1_0001"/>
<dbReference type="KEGG" id="mgm:Mmc1_0001"/>
<dbReference type="eggNOG" id="COG0593">
    <property type="taxonomic scope" value="Bacteria"/>
</dbReference>
<dbReference type="HOGENOM" id="CLU_026910_3_1_5"/>
<dbReference type="OrthoDB" id="9807019at2"/>
<dbReference type="Proteomes" id="UP000002586">
    <property type="component" value="Chromosome"/>
</dbReference>
<dbReference type="GO" id="GO:0005737">
    <property type="term" value="C:cytoplasm"/>
    <property type="evidence" value="ECO:0007669"/>
    <property type="project" value="UniProtKB-SubCell"/>
</dbReference>
<dbReference type="GO" id="GO:0005886">
    <property type="term" value="C:plasma membrane"/>
    <property type="evidence" value="ECO:0007669"/>
    <property type="project" value="TreeGrafter"/>
</dbReference>
<dbReference type="GO" id="GO:0005524">
    <property type="term" value="F:ATP binding"/>
    <property type="evidence" value="ECO:0007669"/>
    <property type="project" value="UniProtKB-UniRule"/>
</dbReference>
<dbReference type="GO" id="GO:0016887">
    <property type="term" value="F:ATP hydrolysis activity"/>
    <property type="evidence" value="ECO:0007669"/>
    <property type="project" value="InterPro"/>
</dbReference>
<dbReference type="GO" id="GO:0003688">
    <property type="term" value="F:DNA replication origin binding"/>
    <property type="evidence" value="ECO:0007669"/>
    <property type="project" value="UniProtKB-UniRule"/>
</dbReference>
<dbReference type="GO" id="GO:0008289">
    <property type="term" value="F:lipid binding"/>
    <property type="evidence" value="ECO:0007669"/>
    <property type="project" value="UniProtKB-KW"/>
</dbReference>
<dbReference type="GO" id="GO:0006270">
    <property type="term" value="P:DNA replication initiation"/>
    <property type="evidence" value="ECO:0007669"/>
    <property type="project" value="UniProtKB-UniRule"/>
</dbReference>
<dbReference type="GO" id="GO:0006275">
    <property type="term" value="P:regulation of DNA replication"/>
    <property type="evidence" value="ECO:0007669"/>
    <property type="project" value="UniProtKB-UniRule"/>
</dbReference>
<dbReference type="CDD" id="cd00009">
    <property type="entry name" value="AAA"/>
    <property type="match status" value="1"/>
</dbReference>
<dbReference type="CDD" id="cd06571">
    <property type="entry name" value="Bac_DnaA_C"/>
    <property type="match status" value="1"/>
</dbReference>
<dbReference type="FunFam" id="1.10.8.60:FF:000003">
    <property type="entry name" value="Chromosomal replication initiator protein DnaA"/>
    <property type="match status" value="1"/>
</dbReference>
<dbReference type="FunFam" id="3.40.50.300:FF:000668">
    <property type="entry name" value="Chromosomal replication initiator protein DnaA"/>
    <property type="match status" value="1"/>
</dbReference>
<dbReference type="Gene3D" id="1.10.1750.10">
    <property type="match status" value="1"/>
</dbReference>
<dbReference type="Gene3D" id="1.10.8.60">
    <property type="match status" value="1"/>
</dbReference>
<dbReference type="Gene3D" id="3.30.300.180">
    <property type="match status" value="1"/>
</dbReference>
<dbReference type="Gene3D" id="3.40.50.300">
    <property type="entry name" value="P-loop containing nucleotide triphosphate hydrolases"/>
    <property type="match status" value="1"/>
</dbReference>
<dbReference type="HAMAP" id="MF_00377">
    <property type="entry name" value="DnaA_bact"/>
    <property type="match status" value="1"/>
</dbReference>
<dbReference type="InterPro" id="IPR003593">
    <property type="entry name" value="AAA+_ATPase"/>
</dbReference>
<dbReference type="InterPro" id="IPR001957">
    <property type="entry name" value="Chromosome_initiator_DnaA"/>
</dbReference>
<dbReference type="InterPro" id="IPR020591">
    <property type="entry name" value="Chromosome_initiator_DnaA-like"/>
</dbReference>
<dbReference type="InterPro" id="IPR018312">
    <property type="entry name" value="Chromosome_initiator_DnaA_CS"/>
</dbReference>
<dbReference type="InterPro" id="IPR013159">
    <property type="entry name" value="DnaA_C"/>
</dbReference>
<dbReference type="InterPro" id="IPR013317">
    <property type="entry name" value="DnaA_dom"/>
</dbReference>
<dbReference type="InterPro" id="IPR024633">
    <property type="entry name" value="DnaA_N_dom"/>
</dbReference>
<dbReference type="InterPro" id="IPR038454">
    <property type="entry name" value="DnaA_N_sf"/>
</dbReference>
<dbReference type="InterPro" id="IPR027417">
    <property type="entry name" value="P-loop_NTPase"/>
</dbReference>
<dbReference type="InterPro" id="IPR010921">
    <property type="entry name" value="Trp_repressor/repl_initiator"/>
</dbReference>
<dbReference type="NCBIfam" id="TIGR00362">
    <property type="entry name" value="DnaA"/>
    <property type="match status" value="1"/>
</dbReference>
<dbReference type="PANTHER" id="PTHR30050">
    <property type="entry name" value="CHROMOSOMAL REPLICATION INITIATOR PROTEIN DNAA"/>
    <property type="match status" value="1"/>
</dbReference>
<dbReference type="PANTHER" id="PTHR30050:SF2">
    <property type="entry name" value="CHROMOSOMAL REPLICATION INITIATOR PROTEIN DNAA"/>
    <property type="match status" value="1"/>
</dbReference>
<dbReference type="Pfam" id="PF00308">
    <property type="entry name" value="Bac_DnaA"/>
    <property type="match status" value="1"/>
</dbReference>
<dbReference type="Pfam" id="PF08299">
    <property type="entry name" value="Bac_DnaA_C"/>
    <property type="match status" value="1"/>
</dbReference>
<dbReference type="Pfam" id="PF11638">
    <property type="entry name" value="DnaA_N"/>
    <property type="match status" value="1"/>
</dbReference>
<dbReference type="PRINTS" id="PR00051">
    <property type="entry name" value="DNAA"/>
</dbReference>
<dbReference type="SMART" id="SM00382">
    <property type="entry name" value="AAA"/>
    <property type="match status" value="1"/>
</dbReference>
<dbReference type="SMART" id="SM00760">
    <property type="entry name" value="Bac_DnaA_C"/>
    <property type="match status" value="1"/>
</dbReference>
<dbReference type="SUPFAM" id="SSF52540">
    <property type="entry name" value="P-loop containing nucleoside triphosphate hydrolases"/>
    <property type="match status" value="1"/>
</dbReference>
<dbReference type="SUPFAM" id="SSF48295">
    <property type="entry name" value="TrpR-like"/>
    <property type="match status" value="1"/>
</dbReference>
<dbReference type="PROSITE" id="PS01008">
    <property type="entry name" value="DNAA"/>
    <property type="match status" value="1"/>
</dbReference>
<name>DNAA_MAGMM</name>
<sequence length="447" mass="49676">MQDFWSKAMDAVAEQVSVQVFEAWIRPLKAGGEVGDGQFQVYAANDFSADWVKKRYGGLLEEILSEQLGEPVTLLFAADPALEKPVASKTQTVTPVQSGGETGDQENFHSGLDPRYTFDSFVVGGCNQFVHAAAARVAEAPAAAYNPLFIHGGVGLGKTHVMQAIGNRVLEIDPDKRVLYISSENFMTQLINSLRFKRVFDFKENFRSVDVLLVDDIQFIAGKKATQEEFFHTFNALYEAKKQIVMTADSFPHEIEHLEERLRSRFGMGLVADMQPPDLETRVAILQKKAGSEGLRLADEVAFFLADAVQTNVRELEGALIRVSAYASLTGKPITMALVKESLKDIVRGQDRAVTVEQIQKTVANYYKVKVTDLCSNSRSRIYSHPRQIAMYLCKQLTQHSYPEIGHRFGGRDHTTVLYAVSQVDKKQGSTPALADELASLKSMLQK</sequence>
<comment type="function">
    <text evidence="1">Plays an essential role in the initiation and regulation of chromosomal replication. ATP-DnaA binds to the origin of replication (oriC) to initiate formation of the DNA replication initiation complex once per cell cycle. Binds the DnaA box (a 9 base pair repeat at the origin) and separates the double-stranded (ds)DNA. Forms a right-handed helical filament on oriC DNA; dsDNA binds to the exterior of the filament while single-stranded (ss)DNA is stabiized in the filament's interior. The ATP-DnaA-oriC complex binds and stabilizes one strand of the AT-rich DNA unwinding element (DUE), permitting loading of DNA polymerase. After initiation quickly degrades to an ADP-DnaA complex that is not apt for DNA replication. Binds acidic phospholipids.</text>
</comment>
<comment type="subunit">
    <text evidence="1">Oligomerizes as a right-handed, spiral filament on DNA at oriC.</text>
</comment>
<comment type="subcellular location">
    <subcellularLocation>
        <location evidence="1">Cytoplasm</location>
    </subcellularLocation>
</comment>
<comment type="domain">
    <text evidence="1">Domain I is involved in oligomerization and binding regulators, domain II is flexibile and of varying length in different bacteria, domain III forms the AAA+ region, while domain IV binds dsDNA.</text>
</comment>
<comment type="similarity">
    <text evidence="1">Belongs to the DnaA family.</text>
</comment>
<reference key="1">
    <citation type="journal article" date="2009" name="Appl. Environ. Microbiol.">
        <title>Complete genome sequence of the chemolithoautotrophic marine magnetotactic coccus strain MC-1.</title>
        <authorList>
            <person name="Schubbe S."/>
            <person name="Williams T.J."/>
            <person name="Xie G."/>
            <person name="Kiss H.E."/>
            <person name="Brettin T.S."/>
            <person name="Martinez D."/>
            <person name="Ross C.A."/>
            <person name="Schuler D."/>
            <person name="Cox B.L."/>
            <person name="Nealson K.H."/>
            <person name="Bazylinski D.A."/>
        </authorList>
    </citation>
    <scope>NUCLEOTIDE SEQUENCE [LARGE SCALE GENOMIC DNA]</scope>
    <source>
        <strain>ATCC BAA-1437 / JCM 17883 / MC-1</strain>
    </source>
</reference>
<proteinExistence type="inferred from homology"/>
<gene>
    <name evidence="1" type="primary">dnaA</name>
    <name type="ordered locus">Mmc1_0001</name>
</gene>
<keyword id="KW-0067">ATP-binding</keyword>
<keyword id="KW-0963">Cytoplasm</keyword>
<keyword id="KW-0235">DNA replication</keyword>
<keyword id="KW-0238">DNA-binding</keyword>
<keyword id="KW-0446">Lipid-binding</keyword>
<keyword id="KW-0547">Nucleotide-binding</keyword>
<keyword id="KW-1185">Reference proteome</keyword>
<organism>
    <name type="scientific">Magnetococcus marinus (strain ATCC BAA-1437 / JCM 17883 / MC-1)</name>
    <dbReference type="NCBI Taxonomy" id="156889"/>
    <lineage>
        <taxon>Bacteria</taxon>
        <taxon>Pseudomonadati</taxon>
        <taxon>Pseudomonadota</taxon>
        <taxon>Alphaproteobacteria</taxon>
        <taxon>Magnetococcales</taxon>
        <taxon>Magnetococcaceae</taxon>
        <taxon>Magnetococcus</taxon>
    </lineage>
</organism>